<organism>
    <name type="scientific">Salmonella dublin (strain CT_02021853)</name>
    <dbReference type="NCBI Taxonomy" id="439851"/>
    <lineage>
        <taxon>Bacteria</taxon>
        <taxon>Pseudomonadati</taxon>
        <taxon>Pseudomonadota</taxon>
        <taxon>Gammaproteobacteria</taxon>
        <taxon>Enterobacterales</taxon>
        <taxon>Enterobacteriaceae</taxon>
        <taxon>Salmonella</taxon>
    </lineage>
</organism>
<comment type="function">
    <text evidence="1">Catalyzes the NADPH-dependent reduction of L-glutamate 5-phosphate into L-glutamate 5-semialdehyde and phosphate. The product spontaneously undergoes cyclization to form 1-pyrroline-5-carboxylate.</text>
</comment>
<comment type="catalytic activity">
    <reaction evidence="1">
        <text>L-glutamate 5-semialdehyde + phosphate + NADP(+) = L-glutamyl 5-phosphate + NADPH + H(+)</text>
        <dbReference type="Rhea" id="RHEA:19541"/>
        <dbReference type="ChEBI" id="CHEBI:15378"/>
        <dbReference type="ChEBI" id="CHEBI:43474"/>
        <dbReference type="ChEBI" id="CHEBI:57783"/>
        <dbReference type="ChEBI" id="CHEBI:58066"/>
        <dbReference type="ChEBI" id="CHEBI:58274"/>
        <dbReference type="ChEBI" id="CHEBI:58349"/>
        <dbReference type="EC" id="1.2.1.41"/>
    </reaction>
</comment>
<comment type="pathway">
    <text evidence="1">Amino-acid biosynthesis; L-proline biosynthesis; L-glutamate 5-semialdehyde from L-glutamate: step 2/2.</text>
</comment>
<comment type="subcellular location">
    <subcellularLocation>
        <location evidence="1">Cytoplasm</location>
    </subcellularLocation>
</comment>
<comment type="similarity">
    <text evidence="1">Belongs to the gamma-glutamyl phosphate reductase family.</text>
</comment>
<keyword id="KW-0028">Amino-acid biosynthesis</keyword>
<keyword id="KW-0963">Cytoplasm</keyword>
<keyword id="KW-0521">NADP</keyword>
<keyword id="KW-0560">Oxidoreductase</keyword>
<keyword id="KW-0641">Proline biosynthesis</keyword>
<evidence type="ECO:0000255" key="1">
    <source>
        <dbReference type="HAMAP-Rule" id="MF_00412"/>
    </source>
</evidence>
<name>PROA_SALDC</name>
<accession>B5FJX5</accession>
<reference key="1">
    <citation type="journal article" date="2011" name="J. Bacteriol.">
        <title>Comparative genomics of 28 Salmonella enterica isolates: evidence for CRISPR-mediated adaptive sublineage evolution.</title>
        <authorList>
            <person name="Fricke W.F."/>
            <person name="Mammel M.K."/>
            <person name="McDermott P.F."/>
            <person name="Tartera C."/>
            <person name="White D.G."/>
            <person name="Leclerc J.E."/>
            <person name="Ravel J."/>
            <person name="Cebula T.A."/>
        </authorList>
    </citation>
    <scope>NUCLEOTIDE SEQUENCE [LARGE SCALE GENOMIC DNA]</scope>
    <source>
        <strain>CT_02021853</strain>
    </source>
</reference>
<gene>
    <name evidence="1" type="primary">proA</name>
    <name type="ordered locus">SeD_A0354</name>
</gene>
<feature type="chain" id="PRO_1000193645" description="Gamma-glutamyl phosphate reductase">
    <location>
        <begin position="1"/>
        <end position="415"/>
    </location>
</feature>
<dbReference type="EC" id="1.2.1.41" evidence="1"/>
<dbReference type="EMBL" id="CP001144">
    <property type="protein sequence ID" value="ACH74124.1"/>
    <property type="molecule type" value="Genomic_DNA"/>
</dbReference>
<dbReference type="RefSeq" id="WP_000893239.1">
    <property type="nucleotide sequence ID" value="NC_011205.1"/>
</dbReference>
<dbReference type="SMR" id="B5FJX5"/>
<dbReference type="KEGG" id="sed:SeD_A0354"/>
<dbReference type="HOGENOM" id="CLU_030231_0_0_6"/>
<dbReference type="UniPathway" id="UPA00098">
    <property type="reaction ID" value="UER00360"/>
</dbReference>
<dbReference type="Proteomes" id="UP000008322">
    <property type="component" value="Chromosome"/>
</dbReference>
<dbReference type="GO" id="GO:0005737">
    <property type="term" value="C:cytoplasm"/>
    <property type="evidence" value="ECO:0007669"/>
    <property type="project" value="UniProtKB-SubCell"/>
</dbReference>
<dbReference type="GO" id="GO:0004350">
    <property type="term" value="F:glutamate-5-semialdehyde dehydrogenase activity"/>
    <property type="evidence" value="ECO:0007669"/>
    <property type="project" value="UniProtKB-UniRule"/>
</dbReference>
<dbReference type="GO" id="GO:0050661">
    <property type="term" value="F:NADP binding"/>
    <property type="evidence" value="ECO:0007669"/>
    <property type="project" value="InterPro"/>
</dbReference>
<dbReference type="GO" id="GO:0055129">
    <property type="term" value="P:L-proline biosynthetic process"/>
    <property type="evidence" value="ECO:0007669"/>
    <property type="project" value="UniProtKB-UniRule"/>
</dbReference>
<dbReference type="CDD" id="cd07079">
    <property type="entry name" value="ALDH_F18-19_ProA-GPR"/>
    <property type="match status" value="1"/>
</dbReference>
<dbReference type="FunFam" id="3.40.309.10:FF:000006">
    <property type="entry name" value="Gamma-glutamyl phosphate reductase"/>
    <property type="match status" value="1"/>
</dbReference>
<dbReference type="Gene3D" id="3.40.605.10">
    <property type="entry name" value="Aldehyde Dehydrogenase, Chain A, domain 1"/>
    <property type="match status" value="1"/>
</dbReference>
<dbReference type="Gene3D" id="3.40.309.10">
    <property type="entry name" value="Aldehyde Dehydrogenase, Chain A, domain 2"/>
    <property type="match status" value="1"/>
</dbReference>
<dbReference type="HAMAP" id="MF_00412">
    <property type="entry name" value="ProA"/>
    <property type="match status" value="1"/>
</dbReference>
<dbReference type="InterPro" id="IPR016161">
    <property type="entry name" value="Ald_DH/histidinol_DH"/>
</dbReference>
<dbReference type="InterPro" id="IPR016163">
    <property type="entry name" value="Ald_DH_C"/>
</dbReference>
<dbReference type="InterPro" id="IPR016162">
    <property type="entry name" value="Ald_DH_N"/>
</dbReference>
<dbReference type="InterPro" id="IPR015590">
    <property type="entry name" value="Aldehyde_DH_dom"/>
</dbReference>
<dbReference type="InterPro" id="IPR020593">
    <property type="entry name" value="G-glutamylP_reductase_CS"/>
</dbReference>
<dbReference type="InterPro" id="IPR012134">
    <property type="entry name" value="Glu-5-SA_DH"/>
</dbReference>
<dbReference type="InterPro" id="IPR000965">
    <property type="entry name" value="GPR_dom"/>
</dbReference>
<dbReference type="NCBIfam" id="NF001221">
    <property type="entry name" value="PRK00197.1"/>
    <property type="match status" value="1"/>
</dbReference>
<dbReference type="NCBIfam" id="TIGR00407">
    <property type="entry name" value="proA"/>
    <property type="match status" value="1"/>
</dbReference>
<dbReference type="PANTHER" id="PTHR11063:SF8">
    <property type="entry name" value="DELTA-1-PYRROLINE-5-CARBOXYLATE SYNTHASE"/>
    <property type="match status" value="1"/>
</dbReference>
<dbReference type="PANTHER" id="PTHR11063">
    <property type="entry name" value="GLUTAMATE SEMIALDEHYDE DEHYDROGENASE"/>
    <property type="match status" value="1"/>
</dbReference>
<dbReference type="Pfam" id="PF00171">
    <property type="entry name" value="Aldedh"/>
    <property type="match status" value="1"/>
</dbReference>
<dbReference type="PIRSF" id="PIRSF000151">
    <property type="entry name" value="GPR"/>
    <property type="match status" value="1"/>
</dbReference>
<dbReference type="SUPFAM" id="SSF53720">
    <property type="entry name" value="ALDH-like"/>
    <property type="match status" value="1"/>
</dbReference>
<dbReference type="PROSITE" id="PS01223">
    <property type="entry name" value="PROA"/>
    <property type="match status" value="1"/>
</dbReference>
<protein>
    <recommendedName>
        <fullName evidence="1">Gamma-glutamyl phosphate reductase</fullName>
        <shortName evidence="1">GPR</shortName>
        <ecNumber evidence="1">1.2.1.41</ecNumber>
    </recommendedName>
    <alternativeName>
        <fullName evidence="1">Glutamate-5-semialdehyde dehydrogenase</fullName>
    </alternativeName>
    <alternativeName>
        <fullName evidence="1">Glutamyl-gamma-semialdehyde dehydrogenase</fullName>
        <shortName evidence="1">GSA dehydrogenase</shortName>
    </alternativeName>
</protein>
<proteinExistence type="inferred from homology"/>
<sequence length="415" mass="44597">MLEQMGIAAKAASYKLALLSSGEKNRVLEKIADELEAQMESILSANVQDVEQARANGLSEAMLDRLTLTPARLKAIADDVRQVCNLADPVGQVIDGGLLDSGLRMERRRVPLGVVGVIYEARPNVTVDVASLCLKTGNAVILRGGKETYRTNAATVRVIQKALKACGLPEAAVQAIDNPDRSLVNEMLRMDKYIDMLIPRGGAGLHKLCREQSTIPVITGGIGVCHIFVDSSADIAPALKIIVNAKTQRPSTCNTVETLLVHQDIAERFLPALSKQMAESGVTLHGDETVMQLHGPAKLVPLKPEKLDNEFLSLDLNVVVVENMDGAIAHIREHGTQHSDAILTSDMHNAARFVNEVDSAAVYVNASTRFTDGGQFGLGAEVAVSTQKLHARGPMGLEALTTYKWIGFGDGTIRA</sequence>